<dbReference type="EC" id="6.5.1.2" evidence="1"/>
<dbReference type="EMBL" id="CR555306">
    <property type="protein sequence ID" value="CAI09771.1"/>
    <property type="molecule type" value="Genomic_DNA"/>
</dbReference>
<dbReference type="RefSeq" id="WP_011239424.1">
    <property type="nucleotide sequence ID" value="NC_006513.1"/>
</dbReference>
<dbReference type="SMR" id="Q5NYU3"/>
<dbReference type="STRING" id="76114.ebA6380"/>
<dbReference type="KEGG" id="eba:ebA6380"/>
<dbReference type="eggNOG" id="COG0272">
    <property type="taxonomic scope" value="Bacteria"/>
</dbReference>
<dbReference type="HOGENOM" id="CLU_007764_2_1_4"/>
<dbReference type="OrthoDB" id="9759736at2"/>
<dbReference type="Proteomes" id="UP000006552">
    <property type="component" value="Chromosome"/>
</dbReference>
<dbReference type="GO" id="GO:0003677">
    <property type="term" value="F:DNA binding"/>
    <property type="evidence" value="ECO:0007669"/>
    <property type="project" value="InterPro"/>
</dbReference>
<dbReference type="GO" id="GO:0003911">
    <property type="term" value="F:DNA ligase (NAD+) activity"/>
    <property type="evidence" value="ECO:0007669"/>
    <property type="project" value="UniProtKB-UniRule"/>
</dbReference>
<dbReference type="GO" id="GO:0046872">
    <property type="term" value="F:metal ion binding"/>
    <property type="evidence" value="ECO:0007669"/>
    <property type="project" value="UniProtKB-KW"/>
</dbReference>
<dbReference type="GO" id="GO:0006281">
    <property type="term" value="P:DNA repair"/>
    <property type="evidence" value="ECO:0007669"/>
    <property type="project" value="UniProtKB-KW"/>
</dbReference>
<dbReference type="GO" id="GO:0006260">
    <property type="term" value="P:DNA replication"/>
    <property type="evidence" value="ECO:0007669"/>
    <property type="project" value="UniProtKB-KW"/>
</dbReference>
<dbReference type="CDD" id="cd17748">
    <property type="entry name" value="BRCT_DNA_ligase_like"/>
    <property type="match status" value="1"/>
</dbReference>
<dbReference type="CDD" id="cd00114">
    <property type="entry name" value="LIGANc"/>
    <property type="match status" value="1"/>
</dbReference>
<dbReference type="FunFam" id="1.10.150.20:FF:000006">
    <property type="entry name" value="DNA ligase"/>
    <property type="match status" value="1"/>
</dbReference>
<dbReference type="FunFam" id="1.10.150.20:FF:000007">
    <property type="entry name" value="DNA ligase"/>
    <property type="match status" value="1"/>
</dbReference>
<dbReference type="FunFam" id="1.10.287.610:FF:000002">
    <property type="entry name" value="DNA ligase"/>
    <property type="match status" value="1"/>
</dbReference>
<dbReference type="FunFam" id="2.40.50.140:FF:000012">
    <property type="entry name" value="DNA ligase"/>
    <property type="match status" value="1"/>
</dbReference>
<dbReference type="FunFam" id="3.30.470.30:FF:000001">
    <property type="entry name" value="DNA ligase"/>
    <property type="match status" value="1"/>
</dbReference>
<dbReference type="Gene3D" id="6.20.10.30">
    <property type="match status" value="1"/>
</dbReference>
<dbReference type="Gene3D" id="1.10.150.20">
    <property type="entry name" value="5' to 3' exonuclease, C-terminal subdomain"/>
    <property type="match status" value="2"/>
</dbReference>
<dbReference type="Gene3D" id="3.40.50.10190">
    <property type="entry name" value="BRCT domain"/>
    <property type="match status" value="1"/>
</dbReference>
<dbReference type="Gene3D" id="3.30.470.30">
    <property type="entry name" value="DNA ligase/mRNA capping enzyme"/>
    <property type="match status" value="1"/>
</dbReference>
<dbReference type="Gene3D" id="1.10.287.610">
    <property type="entry name" value="Helix hairpin bin"/>
    <property type="match status" value="1"/>
</dbReference>
<dbReference type="Gene3D" id="2.40.50.140">
    <property type="entry name" value="Nucleic acid-binding proteins"/>
    <property type="match status" value="1"/>
</dbReference>
<dbReference type="HAMAP" id="MF_01588">
    <property type="entry name" value="DNA_ligase_A"/>
    <property type="match status" value="1"/>
</dbReference>
<dbReference type="InterPro" id="IPR001357">
    <property type="entry name" value="BRCT_dom"/>
</dbReference>
<dbReference type="InterPro" id="IPR036420">
    <property type="entry name" value="BRCT_dom_sf"/>
</dbReference>
<dbReference type="InterPro" id="IPR041663">
    <property type="entry name" value="DisA/LigA_HHH"/>
</dbReference>
<dbReference type="InterPro" id="IPR001679">
    <property type="entry name" value="DNA_ligase"/>
</dbReference>
<dbReference type="InterPro" id="IPR018239">
    <property type="entry name" value="DNA_ligase_AS"/>
</dbReference>
<dbReference type="InterPro" id="IPR033136">
    <property type="entry name" value="DNA_ligase_CS"/>
</dbReference>
<dbReference type="InterPro" id="IPR013839">
    <property type="entry name" value="DNAligase_adenylation"/>
</dbReference>
<dbReference type="InterPro" id="IPR013840">
    <property type="entry name" value="DNAligase_N"/>
</dbReference>
<dbReference type="InterPro" id="IPR003583">
    <property type="entry name" value="Hlx-hairpin-Hlx_DNA-bd_motif"/>
</dbReference>
<dbReference type="InterPro" id="IPR012340">
    <property type="entry name" value="NA-bd_OB-fold"/>
</dbReference>
<dbReference type="InterPro" id="IPR004150">
    <property type="entry name" value="NAD_DNA_ligase_OB"/>
</dbReference>
<dbReference type="InterPro" id="IPR010994">
    <property type="entry name" value="RuvA_2-like"/>
</dbReference>
<dbReference type="InterPro" id="IPR004149">
    <property type="entry name" value="Znf_DNAligase_C4"/>
</dbReference>
<dbReference type="NCBIfam" id="TIGR00575">
    <property type="entry name" value="dnlj"/>
    <property type="match status" value="1"/>
</dbReference>
<dbReference type="NCBIfam" id="NF005932">
    <property type="entry name" value="PRK07956.1"/>
    <property type="match status" value="1"/>
</dbReference>
<dbReference type="PANTHER" id="PTHR23389">
    <property type="entry name" value="CHROMOSOME TRANSMISSION FIDELITY FACTOR 18"/>
    <property type="match status" value="1"/>
</dbReference>
<dbReference type="PANTHER" id="PTHR23389:SF6">
    <property type="entry name" value="REPLICATION FACTOR C SUBUNIT 1"/>
    <property type="match status" value="1"/>
</dbReference>
<dbReference type="Pfam" id="PF00533">
    <property type="entry name" value="BRCT"/>
    <property type="match status" value="1"/>
</dbReference>
<dbReference type="Pfam" id="PF01653">
    <property type="entry name" value="DNA_ligase_aden"/>
    <property type="match status" value="1"/>
</dbReference>
<dbReference type="Pfam" id="PF03120">
    <property type="entry name" value="DNA_ligase_OB"/>
    <property type="match status" value="1"/>
</dbReference>
<dbReference type="Pfam" id="PF03119">
    <property type="entry name" value="DNA_ligase_ZBD"/>
    <property type="match status" value="1"/>
</dbReference>
<dbReference type="Pfam" id="PF12826">
    <property type="entry name" value="HHH_2"/>
    <property type="match status" value="1"/>
</dbReference>
<dbReference type="Pfam" id="PF14520">
    <property type="entry name" value="HHH_5"/>
    <property type="match status" value="1"/>
</dbReference>
<dbReference type="Pfam" id="PF22745">
    <property type="entry name" value="Nlig-Ia"/>
    <property type="match status" value="1"/>
</dbReference>
<dbReference type="PIRSF" id="PIRSF001604">
    <property type="entry name" value="LigA"/>
    <property type="match status" value="1"/>
</dbReference>
<dbReference type="SMART" id="SM00292">
    <property type="entry name" value="BRCT"/>
    <property type="match status" value="1"/>
</dbReference>
<dbReference type="SMART" id="SM00278">
    <property type="entry name" value="HhH1"/>
    <property type="match status" value="4"/>
</dbReference>
<dbReference type="SMART" id="SM00532">
    <property type="entry name" value="LIGANc"/>
    <property type="match status" value="1"/>
</dbReference>
<dbReference type="SUPFAM" id="SSF52113">
    <property type="entry name" value="BRCT domain"/>
    <property type="match status" value="1"/>
</dbReference>
<dbReference type="SUPFAM" id="SSF56091">
    <property type="entry name" value="DNA ligase/mRNA capping enzyme, catalytic domain"/>
    <property type="match status" value="1"/>
</dbReference>
<dbReference type="SUPFAM" id="SSF50249">
    <property type="entry name" value="Nucleic acid-binding proteins"/>
    <property type="match status" value="1"/>
</dbReference>
<dbReference type="SUPFAM" id="SSF47781">
    <property type="entry name" value="RuvA domain 2-like"/>
    <property type="match status" value="1"/>
</dbReference>
<dbReference type="PROSITE" id="PS50172">
    <property type="entry name" value="BRCT"/>
    <property type="match status" value="1"/>
</dbReference>
<dbReference type="PROSITE" id="PS01055">
    <property type="entry name" value="DNA_LIGASE_N1"/>
    <property type="match status" value="1"/>
</dbReference>
<dbReference type="PROSITE" id="PS01056">
    <property type="entry name" value="DNA_LIGASE_N2"/>
    <property type="match status" value="1"/>
</dbReference>
<reference key="1">
    <citation type="journal article" date="2005" name="Arch. Microbiol.">
        <title>The genome sequence of an anaerobic aromatic-degrading denitrifying bacterium, strain EbN1.</title>
        <authorList>
            <person name="Rabus R."/>
            <person name="Kube M."/>
            <person name="Heider J."/>
            <person name="Beck A."/>
            <person name="Heitmann K."/>
            <person name="Widdel F."/>
            <person name="Reinhardt R."/>
        </authorList>
    </citation>
    <scope>NUCLEOTIDE SEQUENCE [LARGE SCALE GENOMIC DNA]</scope>
    <source>
        <strain>DSM 19018 / LMG 30748 / EbN1</strain>
    </source>
</reference>
<protein>
    <recommendedName>
        <fullName evidence="1">DNA ligase</fullName>
        <ecNumber evidence="1">6.5.1.2</ecNumber>
    </recommendedName>
    <alternativeName>
        <fullName evidence="1">Polydeoxyribonucleotide synthase [NAD(+)]</fullName>
    </alternativeName>
</protein>
<evidence type="ECO:0000255" key="1">
    <source>
        <dbReference type="HAMAP-Rule" id="MF_01588"/>
    </source>
</evidence>
<proteinExistence type="inferred from homology"/>
<comment type="function">
    <text evidence="1">DNA ligase that catalyzes the formation of phosphodiester linkages between 5'-phosphoryl and 3'-hydroxyl groups in double-stranded DNA using NAD as a coenzyme and as the energy source for the reaction. It is essential for DNA replication and repair of damaged DNA.</text>
</comment>
<comment type="catalytic activity">
    <reaction evidence="1">
        <text>NAD(+) + (deoxyribonucleotide)n-3'-hydroxyl + 5'-phospho-(deoxyribonucleotide)m = (deoxyribonucleotide)n+m + AMP + beta-nicotinamide D-nucleotide.</text>
        <dbReference type="EC" id="6.5.1.2"/>
    </reaction>
</comment>
<comment type="cofactor">
    <cofactor evidence="1">
        <name>Mg(2+)</name>
        <dbReference type="ChEBI" id="CHEBI:18420"/>
    </cofactor>
    <cofactor evidence="1">
        <name>Mn(2+)</name>
        <dbReference type="ChEBI" id="CHEBI:29035"/>
    </cofactor>
</comment>
<comment type="similarity">
    <text evidence="1">Belongs to the NAD-dependent DNA ligase family. LigA subfamily.</text>
</comment>
<gene>
    <name evidence="1" type="primary">ligA</name>
    <name type="ordered locus">AZOSEA36460</name>
    <name type="ORF">ebA6380</name>
</gene>
<keyword id="KW-0227">DNA damage</keyword>
<keyword id="KW-0234">DNA repair</keyword>
<keyword id="KW-0235">DNA replication</keyword>
<keyword id="KW-0436">Ligase</keyword>
<keyword id="KW-0460">Magnesium</keyword>
<keyword id="KW-0464">Manganese</keyword>
<keyword id="KW-0479">Metal-binding</keyword>
<keyword id="KW-0520">NAD</keyword>
<keyword id="KW-1185">Reference proteome</keyword>
<keyword id="KW-0862">Zinc</keyword>
<name>DNLJ_AROAE</name>
<accession>Q5NYU3</accession>
<feature type="chain" id="PRO_0000313120" description="DNA ligase">
    <location>
        <begin position="1"/>
        <end position="681"/>
    </location>
</feature>
<feature type="domain" description="BRCT" evidence="1">
    <location>
        <begin position="601"/>
        <end position="681"/>
    </location>
</feature>
<feature type="active site" description="N6-AMP-lysine intermediate" evidence="1">
    <location>
        <position position="123"/>
    </location>
</feature>
<feature type="binding site" evidence="1">
    <location>
        <begin position="35"/>
        <end position="39"/>
    </location>
    <ligand>
        <name>NAD(+)</name>
        <dbReference type="ChEBI" id="CHEBI:57540"/>
    </ligand>
</feature>
<feature type="binding site" evidence="1">
    <location>
        <begin position="84"/>
        <end position="85"/>
    </location>
    <ligand>
        <name>NAD(+)</name>
        <dbReference type="ChEBI" id="CHEBI:57540"/>
    </ligand>
</feature>
<feature type="binding site" evidence="1">
    <location>
        <position position="121"/>
    </location>
    <ligand>
        <name>NAD(+)</name>
        <dbReference type="ChEBI" id="CHEBI:57540"/>
    </ligand>
</feature>
<feature type="binding site" evidence="1">
    <location>
        <position position="144"/>
    </location>
    <ligand>
        <name>NAD(+)</name>
        <dbReference type="ChEBI" id="CHEBI:57540"/>
    </ligand>
</feature>
<feature type="binding site" evidence="1">
    <location>
        <position position="180"/>
    </location>
    <ligand>
        <name>NAD(+)</name>
        <dbReference type="ChEBI" id="CHEBI:57540"/>
    </ligand>
</feature>
<feature type="binding site" evidence="1">
    <location>
        <position position="300"/>
    </location>
    <ligand>
        <name>NAD(+)</name>
        <dbReference type="ChEBI" id="CHEBI:57540"/>
    </ligand>
</feature>
<feature type="binding site" evidence="1">
    <location>
        <position position="324"/>
    </location>
    <ligand>
        <name>NAD(+)</name>
        <dbReference type="ChEBI" id="CHEBI:57540"/>
    </ligand>
</feature>
<feature type="binding site" evidence="1">
    <location>
        <position position="418"/>
    </location>
    <ligand>
        <name>Zn(2+)</name>
        <dbReference type="ChEBI" id="CHEBI:29105"/>
    </ligand>
</feature>
<feature type="binding site" evidence="1">
    <location>
        <position position="421"/>
    </location>
    <ligand>
        <name>Zn(2+)</name>
        <dbReference type="ChEBI" id="CHEBI:29105"/>
    </ligand>
</feature>
<feature type="binding site" evidence="1">
    <location>
        <position position="436"/>
    </location>
    <ligand>
        <name>Zn(2+)</name>
        <dbReference type="ChEBI" id="CHEBI:29105"/>
    </ligand>
</feature>
<feature type="binding site" evidence="1">
    <location>
        <position position="442"/>
    </location>
    <ligand>
        <name>Zn(2+)</name>
        <dbReference type="ChEBI" id="CHEBI:29105"/>
    </ligand>
</feature>
<sequence length="681" mass="73901">MSASPEDFERAAQLRRELEAHDHAYYVLDAPTVPDAEYDRLFRELDALERRHPELLVPDSPTRRVGGAPVPGLVPVRHAVPMLSIRTETDTTSGGVIAFDTRVRNALELGPHAPPVEYLGELKFDGLAISLRYENGMLVRAATRGDGYTGEDVTHSVRTIRQIPLRLPGRPPALIEVRGEIYMRRDAFERLNARQSETGGKVFVNPRNAAAGAVRQLDARIAARRPLSFFAYGFGEIGESGGWNMPATQGEMLDALDALGIPVCEHRVVASGPDGLIAFHDRIAAARDSLPYDIDGVVYKVNRFDLQRRLGFVTREPRWAVAHKYPAQEEITELVDIEIQVGRTGALTPVARLKPVFVGGVTVTNATLHNEEEIQRKGLLIGDQVIVRRAGDVIPQIVAPVVERRNGSERPFVMPQTCPVCGSHAEKQPDEAVTRCSGGLFCPAQRKQALLHFAGRRAMDIEGLGDKLVDQLVDGGIVSTPADLYRLGLVKLANLPRMADKSAANLLAAIEKSRHATLARFIFALGIRNVGEATARELARHFGSLDALMDADIERLQQVADVGPIVAHSIAGFFAEMHNREVIEQLRAAGVHWDEGVPAVAADGPASGKTFVLTGALPTMSRDDAKALIESHGGKVSGSVSKKTDYVVAGAEAGSKLAKAQELGVAILDEDGLRRLLEQPA</sequence>
<organism>
    <name type="scientific">Aromatoleum aromaticum (strain DSM 19018 / LMG 30748 / EbN1)</name>
    <name type="common">Azoarcus sp. (strain EbN1)</name>
    <dbReference type="NCBI Taxonomy" id="76114"/>
    <lineage>
        <taxon>Bacteria</taxon>
        <taxon>Pseudomonadati</taxon>
        <taxon>Pseudomonadota</taxon>
        <taxon>Betaproteobacteria</taxon>
        <taxon>Rhodocyclales</taxon>
        <taxon>Rhodocyclaceae</taxon>
        <taxon>Aromatoleum</taxon>
    </lineage>
</organism>